<feature type="chain" id="PRO_1000026624" description="Phosphatidylserine decarboxylase beta chain" evidence="1">
    <location>
        <begin position="1"/>
        <end position="189"/>
    </location>
</feature>
<feature type="chain" id="PRO_1000026625" description="Phosphatidylserine decarboxylase alpha chain" evidence="1">
    <location>
        <begin position="190"/>
        <end position="232"/>
    </location>
</feature>
<feature type="active site" description="Schiff-base intermediate with substrate; via pyruvic acid" evidence="1">
    <location>
        <position position="190"/>
    </location>
</feature>
<feature type="site" description="Cleavage (non-hydrolytic); by autocatalysis" evidence="1">
    <location>
        <begin position="189"/>
        <end position="190"/>
    </location>
</feature>
<feature type="modified residue" description="Pyruvic acid (Ser); by autocatalysis" evidence="1">
    <location>
        <position position="190"/>
    </location>
</feature>
<dbReference type="EC" id="4.1.1.65" evidence="1"/>
<dbReference type="EMBL" id="CP000524">
    <property type="protein sequence ID" value="ABM45376.1"/>
    <property type="molecule type" value="Genomic_DNA"/>
</dbReference>
<dbReference type="RefSeq" id="WP_005766565.1">
    <property type="nucleotide sequence ID" value="NC_008783.1"/>
</dbReference>
<dbReference type="STRING" id="360095.BARBAKC583_0483"/>
<dbReference type="GeneID" id="4684110"/>
<dbReference type="KEGG" id="bbk:BARBAKC583_0483"/>
<dbReference type="PATRIC" id="fig|360095.6.peg.466"/>
<dbReference type="eggNOG" id="COG0688">
    <property type="taxonomic scope" value="Bacteria"/>
</dbReference>
<dbReference type="HOGENOM" id="CLU_072492_0_0_5"/>
<dbReference type="OrthoDB" id="9790893at2"/>
<dbReference type="UniPathway" id="UPA00558">
    <property type="reaction ID" value="UER00616"/>
</dbReference>
<dbReference type="Proteomes" id="UP000000643">
    <property type="component" value="Chromosome"/>
</dbReference>
<dbReference type="GO" id="GO:0005886">
    <property type="term" value="C:plasma membrane"/>
    <property type="evidence" value="ECO:0007669"/>
    <property type="project" value="UniProtKB-SubCell"/>
</dbReference>
<dbReference type="GO" id="GO:0004609">
    <property type="term" value="F:phosphatidylserine decarboxylase activity"/>
    <property type="evidence" value="ECO:0007669"/>
    <property type="project" value="UniProtKB-UniRule"/>
</dbReference>
<dbReference type="GO" id="GO:0006646">
    <property type="term" value="P:phosphatidylethanolamine biosynthetic process"/>
    <property type="evidence" value="ECO:0007669"/>
    <property type="project" value="UniProtKB-UniRule"/>
</dbReference>
<dbReference type="HAMAP" id="MF_00664">
    <property type="entry name" value="PS_decarb_PSD_A"/>
    <property type="match status" value="1"/>
</dbReference>
<dbReference type="InterPro" id="IPR003817">
    <property type="entry name" value="PS_Dcarbxylase"/>
</dbReference>
<dbReference type="InterPro" id="IPR033175">
    <property type="entry name" value="PSD-A"/>
</dbReference>
<dbReference type="NCBIfam" id="NF003677">
    <property type="entry name" value="PRK05305.1-1"/>
    <property type="match status" value="1"/>
</dbReference>
<dbReference type="NCBIfam" id="NF003678">
    <property type="entry name" value="PRK05305.1-2"/>
    <property type="match status" value="1"/>
</dbReference>
<dbReference type="NCBIfam" id="NF003679">
    <property type="entry name" value="PRK05305.1-3"/>
    <property type="match status" value="1"/>
</dbReference>
<dbReference type="NCBIfam" id="NF003685">
    <property type="entry name" value="PRK05305.2-5"/>
    <property type="match status" value="1"/>
</dbReference>
<dbReference type="PANTHER" id="PTHR35809">
    <property type="entry name" value="ARCHAETIDYLSERINE DECARBOXYLASE PROENZYME-RELATED"/>
    <property type="match status" value="1"/>
</dbReference>
<dbReference type="PANTHER" id="PTHR35809:SF1">
    <property type="entry name" value="ARCHAETIDYLSERINE DECARBOXYLASE PROENZYME-RELATED"/>
    <property type="match status" value="1"/>
</dbReference>
<dbReference type="Pfam" id="PF02666">
    <property type="entry name" value="PS_Dcarbxylase"/>
    <property type="match status" value="1"/>
</dbReference>
<gene>
    <name evidence="1" type="primary">psd</name>
    <name type="ordered locus">BARBAKC583_0483</name>
</gene>
<keyword id="KW-1003">Cell membrane</keyword>
<keyword id="KW-0210">Decarboxylase</keyword>
<keyword id="KW-0444">Lipid biosynthesis</keyword>
<keyword id="KW-0443">Lipid metabolism</keyword>
<keyword id="KW-0456">Lyase</keyword>
<keyword id="KW-0472">Membrane</keyword>
<keyword id="KW-0594">Phospholipid biosynthesis</keyword>
<keyword id="KW-1208">Phospholipid metabolism</keyword>
<keyword id="KW-0670">Pyruvate</keyword>
<keyword id="KW-0865">Zymogen</keyword>
<proteinExistence type="inferred from homology"/>
<protein>
    <recommendedName>
        <fullName evidence="1">Phosphatidylserine decarboxylase proenzyme</fullName>
        <ecNumber evidence="1">4.1.1.65</ecNumber>
    </recommendedName>
    <component>
        <recommendedName>
            <fullName evidence="1">Phosphatidylserine decarboxylase alpha chain</fullName>
        </recommendedName>
    </component>
    <component>
        <recommendedName>
            <fullName evidence="1">Phosphatidylserine decarboxylase beta chain</fullName>
        </recommendedName>
    </component>
</protein>
<sequence length="232" mass="25879">MSVFRSIRDGVVPIHKEGYPFIVAFFVASLILGWIWDPLFWFGLVLTVWCIYFFRDPERVTPMNADWVVSPADGRISFVGLCVPPEELDLGKNEMMRVSVFMDVFSCHINRAPVSGTIESIVYSPGKFVNADLDKASEFNERNGVVIDSKHGKIGVVQIAGLVARRIICWSKEDDSVAAGQRFGMIRFGSRLDVYMPAEIKLRVAVGQTSIAGETVLGSFDSDITTTDFRLN</sequence>
<accession>A1US45</accession>
<reference key="1">
    <citation type="submission" date="2006-12" db="EMBL/GenBank/DDBJ databases">
        <authorList>
            <person name="Hendrix L."/>
            <person name="Mohamoud Y."/>
            <person name="Radune D."/>
            <person name="Shvartsbeyn A."/>
            <person name="Daugherty S."/>
            <person name="Dodson R."/>
            <person name="Durkin A.S."/>
            <person name="Harkins D."/>
            <person name="Huot H."/>
            <person name="Kothari S.P."/>
            <person name="Madupu R."/>
            <person name="Li J."/>
            <person name="Nelson W.C."/>
            <person name="Shrivastava S."/>
            <person name="Giglio M.G."/>
            <person name="Haft D."/>
            <person name="Selengut J."/>
            <person name="Fraser-Ligget C."/>
            <person name="Seshadri R."/>
        </authorList>
    </citation>
    <scope>NUCLEOTIDE SEQUENCE [LARGE SCALE GENOMIC DNA]</scope>
    <source>
        <strain>ATCC 35685 / KC583 / Herrer 020/F12,63</strain>
    </source>
</reference>
<comment type="function">
    <text evidence="1">Catalyzes the formation of phosphatidylethanolamine (PtdEtn) from phosphatidylserine (PtdSer).</text>
</comment>
<comment type="catalytic activity">
    <reaction evidence="1">
        <text>a 1,2-diacyl-sn-glycero-3-phospho-L-serine + H(+) = a 1,2-diacyl-sn-glycero-3-phosphoethanolamine + CO2</text>
        <dbReference type="Rhea" id="RHEA:20828"/>
        <dbReference type="ChEBI" id="CHEBI:15378"/>
        <dbReference type="ChEBI" id="CHEBI:16526"/>
        <dbReference type="ChEBI" id="CHEBI:57262"/>
        <dbReference type="ChEBI" id="CHEBI:64612"/>
        <dbReference type="EC" id="4.1.1.65"/>
    </reaction>
</comment>
<comment type="cofactor">
    <cofactor evidence="1">
        <name>pyruvate</name>
        <dbReference type="ChEBI" id="CHEBI:15361"/>
    </cofactor>
    <text evidence="1">Binds 1 pyruvoyl group covalently per subunit.</text>
</comment>
<comment type="pathway">
    <text evidence="1">Phospholipid metabolism; phosphatidylethanolamine biosynthesis; phosphatidylethanolamine from CDP-diacylglycerol: step 2/2.</text>
</comment>
<comment type="subunit">
    <text evidence="1">Heterodimer of a large membrane-associated beta subunit and a small pyruvoyl-containing alpha subunit.</text>
</comment>
<comment type="subcellular location">
    <subcellularLocation>
        <location evidence="1">Cell membrane</location>
        <topology evidence="1">Peripheral membrane protein</topology>
    </subcellularLocation>
</comment>
<comment type="PTM">
    <text evidence="1">Is synthesized initially as an inactive proenzyme. Formation of the active enzyme involves a self-maturation process in which the active site pyruvoyl group is generated from an internal serine residue via an autocatalytic post-translational modification. Two non-identical subunits are generated from the proenzyme in this reaction, and the pyruvate is formed at the N-terminus of the alpha chain, which is derived from the carboxyl end of the proenzyme. The post-translation cleavage follows an unusual pathway, termed non-hydrolytic serinolysis, in which the side chain hydroxyl group of the serine supplies its oxygen atom to form the C-terminus of the beta chain, while the remainder of the serine residue undergoes an oxidative deamination to produce ammonia and the pyruvoyl prosthetic group on the alpha chain.</text>
</comment>
<comment type="similarity">
    <text evidence="1">Belongs to the phosphatidylserine decarboxylase family. PSD-A subfamily.</text>
</comment>
<evidence type="ECO:0000255" key="1">
    <source>
        <dbReference type="HAMAP-Rule" id="MF_00664"/>
    </source>
</evidence>
<organism>
    <name type="scientific">Bartonella bacilliformis (strain ATCC 35685 / KC583 / Herrer 020/F12,63)</name>
    <dbReference type="NCBI Taxonomy" id="360095"/>
    <lineage>
        <taxon>Bacteria</taxon>
        <taxon>Pseudomonadati</taxon>
        <taxon>Pseudomonadota</taxon>
        <taxon>Alphaproteobacteria</taxon>
        <taxon>Hyphomicrobiales</taxon>
        <taxon>Bartonellaceae</taxon>
        <taxon>Bartonella</taxon>
    </lineage>
</organism>
<name>PSD_BARBK</name>